<evidence type="ECO:0000250" key="1"/>
<evidence type="ECO:0000250" key="2">
    <source>
        <dbReference type="UniProtKB" id="P42412"/>
    </source>
</evidence>
<evidence type="ECO:0000250" key="3">
    <source>
        <dbReference type="UniProtKB" id="Q02253"/>
    </source>
</evidence>
<evidence type="ECO:0000250" key="4">
    <source>
        <dbReference type="UniProtKB" id="Q9EQ20"/>
    </source>
</evidence>
<evidence type="ECO:0000255" key="5">
    <source>
        <dbReference type="PROSITE-ProRule" id="PRU10008"/>
    </source>
</evidence>
<evidence type="ECO:0000269" key="6">
    <source>
    </source>
</evidence>
<evidence type="ECO:0000269" key="7">
    <source>
    </source>
</evidence>
<evidence type="ECO:0000303" key="8">
    <source>
    </source>
</evidence>
<evidence type="ECO:0000303" key="9">
    <source>
    </source>
</evidence>
<evidence type="ECO:0000305" key="10"/>
<evidence type="ECO:0000305" key="11">
    <source>
    </source>
</evidence>
<evidence type="ECO:0000312" key="12">
    <source>
        <dbReference type="HGNC" id="HGNC:7179"/>
    </source>
</evidence>
<evidence type="ECO:0007744" key="13">
    <source>
    </source>
</evidence>
<evidence type="ECO:0007829" key="14">
    <source>
        <dbReference type="PDB" id="8XXQ"/>
    </source>
</evidence>
<evidence type="ECO:0007829" key="15">
    <source>
        <dbReference type="PDB" id="9IZV"/>
    </source>
</evidence>
<evidence type="ECO:0007829" key="16">
    <source>
        <dbReference type="PDB" id="9IZW"/>
    </source>
</evidence>
<evidence type="ECO:0007829" key="17">
    <source>
        <dbReference type="PDB" id="9IZX"/>
    </source>
</evidence>
<reference key="1">
    <citation type="journal article" date="2000" name="J. Inherit. Metab. Dis.">
        <title>Molecular characterization of methylmalonate semialdehyde dehydrogenase deficiency.</title>
        <authorList>
            <person name="Chambliss K.L."/>
            <person name="Gray R.G.F."/>
            <person name="Rylance G."/>
            <person name="Pollitt R.J."/>
            <person name="Gibson K.M."/>
        </authorList>
    </citation>
    <scope>NUCLEOTIDE SEQUENCE [MRNA] (ISOFORM 1)</scope>
    <scope>INVOLVEMENT IN MMSDHD</scope>
    <scope>VARIANT MMSDHD ARG-446</scope>
    <source>
        <tissue>Liver</tissue>
        <tissue>Lymphocyte</tissue>
    </source>
</reference>
<reference key="2">
    <citation type="submission" date="1999-05" db="EMBL/GenBank/DDBJ databases">
        <title>Molecular basis of human MMSDH deficiency: gene organization and mutation analysis.</title>
        <authorList>
            <person name="Ding J.H."/>
            <person name="Yang B.Z."/>
            <person name="Wilkinson J."/>
            <person name="Roe C.R."/>
        </authorList>
    </citation>
    <scope>NUCLEOTIDE SEQUENCE [MRNA] (ISOFORM 1)</scope>
    <source>
        <tissue>Skin</tissue>
    </source>
</reference>
<reference key="3">
    <citation type="submission" date="1999-05" db="EMBL/GenBank/DDBJ databases">
        <title>The structure and organization of the methylmalonic semialdehyde dehydrogenase (MMSDH) gene.</title>
        <authorList>
            <person name="Ding J.H."/>
            <person name="Yang B.Z."/>
            <person name="Wilkinson J.K."/>
            <person name="Roe C.R."/>
        </authorList>
    </citation>
    <scope>NUCLEOTIDE SEQUENCE [GENOMIC DNA] (ISOFORM 1)</scope>
</reference>
<reference key="4">
    <citation type="journal article" date="2004" name="Nat. Genet.">
        <title>Complete sequencing and characterization of 21,243 full-length human cDNAs.</title>
        <authorList>
            <person name="Ota T."/>
            <person name="Suzuki Y."/>
            <person name="Nishikawa T."/>
            <person name="Otsuki T."/>
            <person name="Sugiyama T."/>
            <person name="Irie R."/>
            <person name="Wakamatsu A."/>
            <person name="Hayashi K."/>
            <person name="Sato H."/>
            <person name="Nagai K."/>
            <person name="Kimura K."/>
            <person name="Makita H."/>
            <person name="Sekine M."/>
            <person name="Obayashi M."/>
            <person name="Nishi T."/>
            <person name="Shibahara T."/>
            <person name="Tanaka T."/>
            <person name="Ishii S."/>
            <person name="Yamamoto J."/>
            <person name="Saito K."/>
            <person name="Kawai Y."/>
            <person name="Isono Y."/>
            <person name="Nakamura Y."/>
            <person name="Nagahari K."/>
            <person name="Murakami K."/>
            <person name="Yasuda T."/>
            <person name="Iwayanagi T."/>
            <person name="Wagatsuma M."/>
            <person name="Shiratori A."/>
            <person name="Sudo H."/>
            <person name="Hosoiri T."/>
            <person name="Kaku Y."/>
            <person name="Kodaira H."/>
            <person name="Kondo H."/>
            <person name="Sugawara M."/>
            <person name="Takahashi M."/>
            <person name="Kanda K."/>
            <person name="Yokoi T."/>
            <person name="Furuya T."/>
            <person name="Kikkawa E."/>
            <person name="Omura Y."/>
            <person name="Abe K."/>
            <person name="Kamihara K."/>
            <person name="Katsuta N."/>
            <person name="Sato K."/>
            <person name="Tanikawa M."/>
            <person name="Yamazaki M."/>
            <person name="Ninomiya K."/>
            <person name="Ishibashi T."/>
            <person name="Yamashita H."/>
            <person name="Murakawa K."/>
            <person name="Fujimori K."/>
            <person name="Tanai H."/>
            <person name="Kimata M."/>
            <person name="Watanabe M."/>
            <person name="Hiraoka S."/>
            <person name="Chiba Y."/>
            <person name="Ishida S."/>
            <person name="Ono Y."/>
            <person name="Takiguchi S."/>
            <person name="Watanabe S."/>
            <person name="Yosida M."/>
            <person name="Hotuta T."/>
            <person name="Kusano J."/>
            <person name="Kanehori K."/>
            <person name="Takahashi-Fujii A."/>
            <person name="Hara H."/>
            <person name="Tanase T.-O."/>
            <person name="Nomura Y."/>
            <person name="Togiya S."/>
            <person name="Komai F."/>
            <person name="Hara R."/>
            <person name="Takeuchi K."/>
            <person name="Arita M."/>
            <person name="Imose N."/>
            <person name="Musashino K."/>
            <person name="Yuuki H."/>
            <person name="Oshima A."/>
            <person name="Sasaki N."/>
            <person name="Aotsuka S."/>
            <person name="Yoshikawa Y."/>
            <person name="Matsunawa H."/>
            <person name="Ichihara T."/>
            <person name="Shiohata N."/>
            <person name="Sano S."/>
            <person name="Moriya S."/>
            <person name="Momiyama H."/>
            <person name="Satoh N."/>
            <person name="Takami S."/>
            <person name="Terashima Y."/>
            <person name="Suzuki O."/>
            <person name="Nakagawa S."/>
            <person name="Senoh A."/>
            <person name="Mizoguchi H."/>
            <person name="Goto Y."/>
            <person name="Shimizu F."/>
            <person name="Wakebe H."/>
            <person name="Hishigaki H."/>
            <person name="Watanabe T."/>
            <person name="Sugiyama A."/>
            <person name="Takemoto M."/>
            <person name="Kawakami B."/>
            <person name="Yamazaki M."/>
            <person name="Watanabe K."/>
            <person name="Kumagai A."/>
            <person name="Itakura S."/>
            <person name="Fukuzumi Y."/>
            <person name="Fujimori Y."/>
            <person name="Komiyama M."/>
            <person name="Tashiro H."/>
            <person name="Tanigami A."/>
            <person name="Fujiwara T."/>
            <person name="Ono T."/>
            <person name="Yamada K."/>
            <person name="Fujii Y."/>
            <person name="Ozaki K."/>
            <person name="Hirao M."/>
            <person name="Ohmori Y."/>
            <person name="Kawabata A."/>
            <person name="Hikiji T."/>
            <person name="Kobatake N."/>
            <person name="Inagaki H."/>
            <person name="Ikema Y."/>
            <person name="Okamoto S."/>
            <person name="Okitani R."/>
            <person name="Kawakami T."/>
            <person name="Noguchi S."/>
            <person name="Itoh T."/>
            <person name="Shigeta K."/>
            <person name="Senba T."/>
            <person name="Matsumura K."/>
            <person name="Nakajima Y."/>
            <person name="Mizuno T."/>
            <person name="Morinaga M."/>
            <person name="Sasaki M."/>
            <person name="Togashi T."/>
            <person name="Oyama M."/>
            <person name="Hata H."/>
            <person name="Watanabe M."/>
            <person name="Komatsu T."/>
            <person name="Mizushima-Sugano J."/>
            <person name="Satoh T."/>
            <person name="Shirai Y."/>
            <person name="Takahashi Y."/>
            <person name="Nakagawa K."/>
            <person name="Okumura K."/>
            <person name="Nagase T."/>
            <person name="Nomura N."/>
            <person name="Kikuchi H."/>
            <person name="Masuho Y."/>
            <person name="Yamashita R."/>
            <person name="Nakai K."/>
            <person name="Yada T."/>
            <person name="Nakamura Y."/>
            <person name="Ohara O."/>
            <person name="Isogai T."/>
            <person name="Sugano S."/>
        </authorList>
    </citation>
    <scope>NUCLEOTIDE SEQUENCE [LARGE SCALE MRNA] (ISOFORMS 1 AND 2)</scope>
    <source>
        <tissue>Amygdala</tissue>
    </source>
</reference>
<reference key="5">
    <citation type="journal article" date="2003" name="Nature">
        <title>The DNA sequence and analysis of human chromosome 14.</title>
        <authorList>
            <person name="Heilig R."/>
            <person name="Eckenberg R."/>
            <person name="Petit J.-L."/>
            <person name="Fonknechten N."/>
            <person name="Da Silva C."/>
            <person name="Cattolico L."/>
            <person name="Levy M."/>
            <person name="Barbe V."/>
            <person name="De Berardinis V."/>
            <person name="Ureta-Vidal A."/>
            <person name="Pelletier E."/>
            <person name="Vico V."/>
            <person name="Anthouard V."/>
            <person name="Rowen L."/>
            <person name="Madan A."/>
            <person name="Qin S."/>
            <person name="Sun H."/>
            <person name="Du H."/>
            <person name="Pepin K."/>
            <person name="Artiguenave F."/>
            <person name="Robert C."/>
            <person name="Cruaud C."/>
            <person name="Bruels T."/>
            <person name="Jaillon O."/>
            <person name="Friedlander L."/>
            <person name="Samson G."/>
            <person name="Brottier P."/>
            <person name="Cure S."/>
            <person name="Segurens B."/>
            <person name="Aniere F."/>
            <person name="Samain S."/>
            <person name="Crespeau H."/>
            <person name="Abbasi N."/>
            <person name="Aiach N."/>
            <person name="Boscus D."/>
            <person name="Dickhoff R."/>
            <person name="Dors M."/>
            <person name="Dubois I."/>
            <person name="Friedman C."/>
            <person name="Gouyvenoux M."/>
            <person name="James R."/>
            <person name="Madan A."/>
            <person name="Mairey-Estrada B."/>
            <person name="Mangenot S."/>
            <person name="Martins N."/>
            <person name="Menard M."/>
            <person name="Oztas S."/>
            <person name="Ratcliffe A."/>
            <person name="Shaffer T."/>
            <person name="Trask B."/>
            <person name="Vacherie B."/>
            <person name="Bellemere C."/>
            <person name="Belser C."/>
            <person name="Besnard-Gonnet M."/>
            <person name="Bartol-Mavel D."/>
            <person name="Boutard M."/>
            <person name="Briez-Silla S."/>
            <person name="Combette S."/>
            <person name="Dufosse-Laurent V."/>
            <person name="Ferron C."/>
            <person name="Lechaplais C."/>
            <person name="Louesse C."/>
            <person name="Muselet D."/>
            <person name="Magdelenat G."/>
            <person name="Pateau E."/>
            <person name="Petit E."/>
            <person name="Sirvain-Trukniewicz P."/>
            <person name="Trybou A."/>
            <person name="Vega-Czarny N."/>
            <person name="Bataille E."/>
            <person name="Bluet E."/>
            <person name="Bordelais I."/>
            <person name="Dubois M."/>
            <person name="Dumont C."/>
            <person name="Guerin T."/>
            <person name="Haffray S."/>
            <person name="Hammadi R."/>
            <person name="Muanga J."/>
            <person name="Pellouin V."/>
            <person name="Robert D."/>
            <person name="Wunderle E."/>
            <person name="Gauguet G."/>
            <person name="Roy A."/>
            <person name="Sainte-Marthe L."/>
            <person name="Verdier J."/>
            <person name="Verdier-Discala C."/>
            <person name="Hillier L.W."/>
            <person name="Fulton L."/>
            <person name="McPherson J."/>
            <person name="Matsuda F."/>
            <person name="Wilson R."/>
            <person name="Scarpelli C."/>
            <person name="Gyapay G."/>
            <person name="Wincker P."/>
            <person name="Saurin W."/>
            <person name="Quetier F."/>
            <person name="Waterston R."/>
            <person name="Hood L."/>
            <person name="Weissenbach J."/>
        </authorList>
    </citation>
    <scope>NUCLEOTIDE SEQUENCE [LARGE SCALE GENOMIC DNA]</scope>
</reference>
<reference key="6">
    <citation type="submission" date="2005-07" db="EMBL/GenBank/DDBJ databases">
        <authorList>
            <person name="Mural R.J."/>
            <person name="Istrail S."/>
            <person name="Sutton G.G."/>
            <person name="Florea L."/>
            <person name="Halpern A.L."/>
            <person name="Mobarry C.M."/>
            <person name="Lippert R."/>
            <person name="Walenz B."/>
            <person name="Shatkay H."/>
            <person name="Dew I."/>
            <person name="Miller J.R."/>
            <person name="Flanigan M.J."/>
            <person name="Edwards N.J."/>
            <person name="Bolanos R."/>
            <person name="Fasulo D."/>
            <person name="Halldorsson B.V."/>
            <person name="Hannenhalli S."/>
            <person name="Turner R."/>
            <person name="Yooseph S."/>
            <person name="Lu F."/>
            <person name="Nusskern D.R."/>
            <person name="Shue B.C."/>
            <person name="Zheng X.H."/>
            <person name="Zhong F."/>
            <person name="Delcher A.L."/>
            <person name="Huson D.H."/>
            <person name="Kravitz S.A."/>
            <person name="Mouchard L."/>
            <person name="Reinert K."/>
            <person name="Remington K.A."/>
            <person name="Clark A.G."/>
            <person name="Waterman M.S."/>
            <person name="Eichler E.E."/>
            <person name="Adams M.D."/>
            <person name="Hunkapiller M.W."/>
            <person name="Myers E.W."/>
            <person name="Venter J.C."/>
        </authorList>
    </citation>
    <scope>NUCLEOTIDE SEQUENCE [LARGE SCALE GENOMIC DNA]</scope>
</reference>
<reference key="7">
    <citation type="journal article" date="2004" name="Genome Res.">
        <title>The status, quality, and expansion of the NIH full-length cDNA project: the Mammalian Gene Collection (MGC).</title>
        <authorList>
            <consortium name="The MGC Project Team"/>
        </authorList>
    </citation>
    <scope>NUCLEOTIDE SEQUENCE [LARGE SCALE MRNA] (ISOFORM 1)</scope>
    <source>
        <tissue>Brain</tissue>
        <tissue>Muscle</tissue>
    </source>
</reference>
<reference key="8">
    <citation type="journal article" date="1992" name="J. Biol. Chem.">
        <title>CoA-dependent methylmalonate-semialdehyde dehydrogenase, a unique member of the aldehyde dehydrogenase superfamily. cDNA cloning, evolutionary relationships, and tissue distribution.</title>
        <authorList>
            <person name="Kedishvili N.Y."/>
            <person name="Popov K.M."/>
            <person name="Rougraff P.M."/>
            <person name="Zhao Y."/>
            <person name="Crabb D.W."/>
            <person name="Harris R.A."/>
        </authorList>
    </citation>
    <scope>NUCLEOTIDE SEQUENCE [MRNA] OF 106-535 (ISOFORM 1)</scope>
    <source>
        <tissue>Liver</tissue>
    </source>
</reference>
<reference key="9">
    <citation type="journal article" date="2011" name="BMC Syst. Biol.">
        <title>Initial characterization of the human central proteome.</title>
        <authorList>
            <person name="Burkard T.R."/>
            <person name="Planyavsky M."/>
            <person name="Kaupe I."/>
            <person name="Breitwieser F.P."/>
            <person name="Buerckstuemmer T."/>
            <person name="Bennett K.L."/>
            <person name="Superti-Furga G."/>
            <person name="Colinge J."/>
        </authorList>
    </citation>
    <scope>IDENTIFICATION BY MASS SPECTROMETRY [LARGE SCALE ANALYSIS]</scope>
</reference>
<reference key="10">
    <citation type="journal article" date="2014" name="J. Proteomics">
        <title>An enzyme assisted RP-RPLC approach for in-depth analysis of human liver phosphoproteome.</title>
        <authorList>
            <person name="Bian Y."/>
            <person name="Song C."/>
            <person name="Cheng K."/>
            <person name="Dong M."/>
            <person name="Wang F."/>
            <person name="Huang J."/>
            <person name="Sun D."/>
            <person name="Wang L."/>
            <person name="Ye M."/>
            <person name="Zou H."/>
        </authorList>
    </citation>
    <scope>PHOSPHORYLATION [LARGE SCALE ANALYSIS] AT SER-262 AND SER-380</scope>
    <scope>IDENTIFICATION BY MASS SPECTROMETRY [LARGE SCALE ANALYSIS]</scope>
    <source>
        <tissue>Liver</tissue>
    </source>
</reference>
<reference key="11">
    <citation type="journal article" date="2015" name="Proteomics">
        <title>N-terminome analysis of the human mitochondrial proteome.</title>
        <authorList>
            <person name="Vaca Jacome A.S."/>
            <person name="Rabilloud T."/>
            <person name="Schaeffer-Reiss C."/>
            <person name="Rompais M."/>
            <person name="Ayoub D."/>
            <person name="Lane L."/>
            <person name="Bairoch A."/>
            <person name="Van Dorsselaer A."/>
            <person name="Carapito C."/>
        </authorList>
    </citation>
    <scope>IDENTIFICATION BY MASS SPECTROMETRY [LARGE SCALE ANALYSIS]</scope>
</reference>
<reference key="12">
    <citation type="journal article" date="2013" name="Orphanet J. Rare Dis.">
        <title>Mutations in ALDH6A1 encoding methylmalonate semialdehyde dehydrogenase are associated with dysmyelination and transient methylmalonic aciduria.</title>
        <authorList>
            <consortium name="FORGE Canada Consortium"/>
            <person name="Marcadier J.L."/>
            <person name="Smith A.M."/>
            <person name="Pohl D."/>
            <person name="Schwartzentruber J."/>
            <person name="Al-Dirbashi O.Y."/>
            <person name="Majewski J."/>
            <person name="Ferdinandusse S."/>
            <person name="Wanders R.J."/>
            <person name="Bulman D.E."/>
            <person name="Boycott K.M."/>
            <person name="Chakraborty P."/>
            <person name="Geraghty M.T."/>
        </authorList>
    </citation>
    <scope>VARIANTS MMSDHD HIS-172 AND CYS-535</scope>
    <scope>FUNCTION</scope>
    <scope>CATALYTIC ACTIVITY</scope>
    <scope>SUBCELLULAR LOCATION</scope>
</reference>
<organism>
    <name type="scientific">Homo sapiens</name>
    <name type="common">Human</name>
    <dbReference type="NCBI Taxonomy" id="9606"/>
    <lineage>
        <taxon>Eukaryota</taxon>
        <taxon>Metazoa</taxon>
        <taxon>Chordata</taxon>
        <taxon>Craniata</taxon>
        <taxon>Vertebrata</taxon>
        <taxon>Euteleostomi</taxon>
        <taxon>Mammalia</taxon>
        <taxon>Eutheria</taxon>
        <taxon>Euarchontoglires</taxon>
        <taxon>Primates</taxon>
        <taxon>Haplorrhini</taxon>
        <taxon>Catarrhini</taxon>
        <taxon>Hominidae</taxon>
        <taxon>Homo</taxon>
    </lineage>
</organism>
<dbReference type="EC" id="1.2.1.27" evidence="7"/>
<dbReference type="EMBL" id="AJ249994">
    <property type="protein sequence ID" value="CAB76468.1"/>
    <property type="molecule type" value="mRNA"/>
</dbReference>
<dbReference type="EMBL" id="AF159889">
    <property type="protein sequence ID" value="AAF80380.1"/>
    <property type="molecule type" value="mRNA"/>
</dbReference>
<dbReference type="EMBL" id="AF148505">
    <property type="protein sequence ID" value="AAF04489.1"/>
    <property type="molecule type" value="mRNA"/>
</dbReference>
<dbReference type="EMBL" id="AF148855">
    <property type="protein sequence ID" value="AAG29581.1"/>
    <property type="molecule type" value="Genomic_DNA"/>
</dbReference>
<dbReference type="EMBL" id="AK312389">
    <property type="protein sequence ID" value="BAG35306.1"/>
    <property type="molecule type" value="mRNA"/>
</dbReference>
<dbReference type="EMBL" id="AK294243">
    <property type="protein sequence ID" value="BAG57539.1"/>
    <property type="molecule type" value="mRNA"/>
</dbReference>
<dbReference type="EMBL" id="AC005484">
    <property type="status" value="NOT_ANNOTATED_CDS"/>
    <property type="molecule type" value="Genomic_DNA"/>
</dbReference>
<dbReference type="EMBL" id="CH471061">
    <property type="protein sequence ID" value="EAW81159.1"/>
    <property type="molecule type" value="Genomic_DNA"/>
</dbReference>
<dbReference type="EMBL" id="BC004909">
    <property type="protein sequence ID" value="AAH04909.1"/>
    <property type="molecule type" value="mRNA"/>
</dbReference>
<dbReference type="EMBL" id="BC032371">
    <property type="protein sequence ID" value="AAH32371.1"/>
    <property type="molecule type" value="mRNA"/>
</dbReference>
<dbReference type="EMBL" id="M93405">
    <property type="protein sequence ID" value="AAA36328.1"/>
    <property type="molecule type" value="mRNA"/>
</dbReference>
<dbReference type="CCDS" id="CCDS61501.1">
    <molecule id="Q02252-2"/>
</dbReference>
<dbReference type="CCDS" id="CCDS9826.1">
    <molecule id="Q02252-1"/>
</dbReference>
<dbReference type="RefSeq" id="NP_001265522.1">
    <molecule id="Q02252-2"/>
    <property type="nucleotide sequence ID" value="NM_001278593.2"/>
</dbReference>
<dbReference type="RefSeq" id="NP_005580.1">
    <molecule id="Q02252-1"/>
    <property type="nucleotide sequence ID" value="NM_005589.4"/>
</dbReference>
<dbReference type="PDB" id="8XXQ">
    <property type="method" value="EM"/>
    <property type="resolution" value="2.75 A"/>
    <property type="chains" value="A/B/C/D=35-533"/>
</dbReference>
<dbReference type="PDB" id="9IZU">
    <property type="method" value="EM"/>
    <property type="resolution" value="3.70 A"/>
    <property type="chains" value="C/D=33-535"/>
</dbReference>
<dbReference type="PDB" id="9IZV">
    <property type="method" value="EM"/>
    <property type="resolution" value="3.02 A"/>
    <property type="chains" value="A/B/C/D=33-535"/>
</dbReference>
<dbReference type="PDB" id="9IZW">
    <property type="method" value="EM"/>
    <property type="resolution" value="3.12 A"/>
    <property type="chains" value="A/B/C/D=33-535"/>
</dbReference>
<dbReference type="PDB" id="9IZX">
    <property type="method" value="EM"/>
    <property type="resolution" value="3.00 A"/>
    <property type="chains" value="A/B/C/D=33-535"/>
</dbReference>
<dbReference type="PDBsum" id="8XXQ"/>
<dbReference type="PDBsum" id="9IZU"/>
<dbReference type="PDBsum" id="9IZV"/>
<dbReference type="PDBsum" id="9IZW"/>
<dbReference type="PDBsum" id="9IZX"/>
<dbReference type="EMDB" id="EMD-38758"/>
<dbReference type="EMDB" id="EMD-61042"/>
<dbReference type="EMDB" id="EMD-61043"/>
<dbReference type="EMDB" id="EMD-61044"/>
<dbReference type="EMDB" id="EMD-61045"/>
<dbReference type="SMR" id="Q02252"/>
<dbReference type="BioGRID" id="110472">
    <property type="interactions" value="48"/>
</dbReference>
<dbReference type="FunCoup" id="Q02252">
    <property type="interactions" value="1765"/>
</dbReference>
<dbReference type="IntAct" id="Q02252">
    <property type="interactions" value="20"/>
</dbReference>
<dbReference type="MINT" id="Q02252"/>
<dbReference type="STRING" id="9606.ENSP00000450436"/>
<dbReference type="DrugBank" id="DB00157">
    <property type="generic name" value="NADH"/>
</dbReference>
<dbReference type="GlyGen" id="Q02252">
    <property type="glycosylation" value="2 sites, 1 O-linked glycan (1 site)"/>
</dbReference>
<dbReference type="iPTMnet" id="Q02252"/>
<dbReference type="MetOSite" id="Q02252"/>
<dbReference type="PhosphoSitePlus" id="Q02252"/>
<dbReference type="SwissPalm" id="Q02252"/>
<dbReference type="BioMuta" id="ALDH6A1"/>
<dbReference type="DMDM" id="12643424"/>
<dbReference type="REPRODUCTION-2DPAGE" id="IPI00024990"/>
<dbReference type="jPOST" id="Q02252"/>
<dbReference type="MassIVE" id="Q02252"/>
<dbReference type="PaxDb" id="9606-ENSP00000450436"/>
<dbReference type="PeptideAtlas" id="Q02252"/>
<dbReference type="ProteomicsDB" id="58069">
    <molecule id="Q02252-1"/>
</dbReference>
<dbReference type="Pumba" id="Q02252"/>
<dbReference type="Antibodypedia" id="25547">
    <property type="antibodies" value="503 antibodies from 30 providers"/>
</dbReference>
<dbReference type="DNASU" id="4329"/>
<dbReference type="Ensembl" id="ENST00000350259.8">
    <molecule id="Q02252-2"/>
    <property type="protein sequence ID" value="ENSP00000342564.4"/>
    <property type="gene ID" value="ENSG00000119711.13"/>
</dbReference>
<dbReference type="Ensembl" id="ENST00000553458.6">
    <molecule id="Q02252-1"/>
    <property type="protein sequence ID" value="ENSP00000450436.1"/>
    <property type="gene ID" value="ENSG00000119711.13"/>
</dbReference>
<dbReference type="GeneID" id="4329"/>
<dbReference type="KEGG" id="hsa:4329"/>
<dbReference type="MANE-Select" id="ENST00000553458.6">
    <property type="protein sequence ID" value="ENSP00000450436.1"/>
    <property type="RefSeq nucleotide sequence ID" value="NM_005589.4"/>
    <property type="RefSeq protein sequence ID" value="NP_005580.1"/>
</dbReference>
<dbReference type="UCSC" id="uc001xpo.5">
    <molecule id="Q02252-1"/>
    <property type="organism name" value="human"/>
</dbReference>
<dbReference type="AGR" id="HGNC:7179"/>
<dbReference type="CTD" id="4329"/>
<dbReference type="DisGeNET" id="4329"/>
<dbReference type="GeneCards" id="ALDH6A1"/>
<dbReference type="HGNC" id="HGNC:7179">
    <property type="gene designation" value="ALDH6A1"/>
</dbReference>
<dbReference type="HPA" id="ENSG00000119711">
    <property type="expression patterns" value="Group enriched (kidney, liver)"/>
</dbReference>
<dbReference type="MalaCards" id="ALDH6A1"/>
<dbReference type="MIM" id="603178">
    <property type="type" value="gene"/>
</dbReference>
<dbReference type="MIM" id="614105">
    <property type="type" value="phenotype"/>
</dbReference>
<dbReference type="neXtProt" id="NX_Q02252"/>
<dbReference type="OpenTargets" id="ENSG00000119711"/>
<dbReference type="Orphanet" id="289307">
    <property type="disease" value="Developmental delay due to methylmalonate semialdehyde dehydrogenase deficiency"/>
</dbReference>
<dbReference type="PharmGKB" id="PA24703"/>
<dbReference type="VEuPathDB" id="HostDB:ENSG00000119711"/>
<dbReference type="eggNOG" id="KOG2449">
    <property type="taxonomic scope" value="Eukaryota"/>
</dbReference>
<dbReference type="GeneTree" id="ENSGT00940000156110"/>
<dbReference type="InParanoid" id="Q02252"/>
<dbReference type="OMA" id="GGAKNHI"/>
<dbReference type="OrthoDB" id="310895at2759"/>
<dbReference type="PAN-GO" id="Q02252">
    <property type="GO annotations" value="5 GO annotations based on evolutionary models"/>
</dbReference>
<dbReference type="PhylomeDB" id="Q02252"/>
<dbReference type="TreeFam" id="TF105651"/>
<dbReference type="BRENDA" id="1.2.1.18">
    <property type="organism ID" value="2681"/>
</dbReference>
<dbReference type="BRENDA" id="1.2.1.27">
    <property type="organism ID" value="2681"/>
</dbReference>
<dbReference type="PathwayCommons" id="Q02252"/>
<dbReference type="Reactome" id="R-HSA-70895">
    <property type="pathway name" value="Branched-chain amino acid catabolism"/>
</dbReference>
<dbReference type="SignaLink" id="Q02252"/>
<dbReference type="BioGRID-ORCS" id="4329">
    <property type="hits" value="7 hits in 1161 CRISPR screens"/>
</dbReference>
<dbReference type="CD-CODE" id="FB4E32DD">
    <property type="entry name" value="Presynaptic clusters and postsynaptic densities"/>
</dbReference>
<dbReference type="ChiTaRS" id="ALDH6A1">
    <property type="organism name" value="human"/>
</dbReference>
<dbReference type="GeneWiki" id="Aldehyde_dehydrogenase_6_family,_member_A1"/>
<dbReference type="GenomeRNAi" id="4329"/>
<dbReference type="Pharos" id="Q02252">
    <property type="development level" value="Tbio"/>
</dbReference>
<dbReference type="PRO" id="PR:Q02252"/>
<dbReference type="Proteomes" id="UP000005640">
    <property type="component" value="Chromosome 14"/>
</dbReference>
<dbReference type="RNAct" id="Q02252">
    <property type="molecule type" value="protein"/>
</dbReference>
<dbReference type="Bgee" id="ENSG00000119711">
    <property type="expression patterns" value="Expressed in adult organism and 214 other cell types or tissues"/>
</dbReference>
<dbReference type="ExpressionAtlas" id="Q02252">
    <property type="expression patterns" value="baseline and differential"/>
</dbReference>
<dbReference type="GO" id="GO:0005759">
    <property type="term" value="C:mitochondrial matrix"/>
    <property type="evidence" value="ECO:0000304"/>
    <property type="project" value="Reactome"/>
</dbReference>
<dbReference type="GO" id="GO:0005739">
    <property type="term" value="C:mitochondrion"/>
    <property type="evidence" value="ECO:0000314"/>
    <property type="project" value="HPA"/>
</dbReference>
<dbReference type="GO" id="GO:0005654">
    <property type="term" value="C:nucleoplasm"/>
    <property type="evidence" value="ECO:0000314"/>
    <property type="project" value="HPA"/>
</dbReference>
<dbReference type="GO" id="GO:0018478">
    <property type="term" value="F:malonate-semialdehyde dehydrogenase (acetylating) activity"/>
    <property type="evidence" value="ECO:0007669"/>
    <property type="project" value="UniProtKB-EC"/>
</dbReference>
<dbReference type="GO" id="GO:0004491">
    <property type="term" value="F:methylmalonate-semialdehyde dehydrogenase (acylating, NAD) activity"/>
    <property type="evidence" value="ECO:0000315"/>
    <property type="project" value="BHF-UCL"/>
</dbReference>
<dbReference type="GO" id="GO:0003723">
    <property type="term" value="F:RNA binding"/>
    <property type="evidence" value="ECO:0007005"/>
    <property type="project" value="UniProtKB"/>
</dbReference>
<dbReference type="GO" id="GO:0009083">
    <property type="term" value="P:branched-chain amino acid catabolic process"/>
    <property type="evidence" value="ECO:0000304"/>
    <property type="project" value="Reactome"/>
</dbReference>
<dbReference type="GO" id="GO:0050873">
    <property type="term" value="P:brown fat cell differentiation"/>
    <property type="evidence" value="ECO:0007669"/>
    <property type="project" value="Ensembl"/>
</dbReference>
<dbReference type="GO" id="GO:0006210">
    <property type="term" value="P:thymine catabolic process"/>
    <property type="evidence" value="ECO:0000315"/>
    <property type="project" value="BHF-UCL"/>
</dbReference>
<dbReference type="GO" id="GO:0019859">
    <property type="term" value="P:thymine metabolic process"/>
    <property type="evidence" value="ECO:0000250"/>
    <property type="project" value="UniProtKB"/>
</dbReference>
<dbReference type="GO" id="GO:0006574">
    <property type="term" value="P:valine catabolic process"/>
    <property type="evidence" value="ECO:0000315"/>
    <property type="project" value="BHF-UCL"/>
</dbReference>
<dbReference type="GO" id="GO:0006573">
    <property type="term" value="P:valine metabolic process"/>
    <property type="evidence" value="ECO:0000250"/>
    <property type="project" value="UniProtKB"/>
</dbReference>
<dbReference type="CDD" id="cd07085">
    <property type="entry name" value="ALDH_F6_MMSDH"/>
    <property type="match status" value="1"/>
</dbReference>
<dbReference type="FunFam" id="3.40.309.10:FF:000002">
    <property type="entry name" value="Methylmalonate-semialdehyde dehydrogenase (Acylating)"/>
    <property type="match status" value="1"/>
</dbReference>
<dbReference type="FunFam" id="3.40.605.10:FF:000003">
    <property type="entry name" value="Methylmalonate-semialdehyde dehydrogenase [acylating]"/>
    <property type="match status" value="1"/>
</dbReference>
<dbReference type="Gene3D" id="3.40.605.10">
    <property type="entry name" value="Aldehyde Dehydrogenase, Chain A, domain 1"/>
    <property type="match status" value="1"/>
</dbReference>
<dbReference type="Gene3D" id="3.40.309.10">
    <property type="entry name" value="Aldehyde Dehydrogenase, Chain A, domain 2"/>
    <property type="match status" value="1"/>
</dbReference>
<dbReference type="InterPro" id="IPR016161">
    <property type="entry name" value="Ald_DH/histidinol_DH"/>
</dbReference>
<dbReference type="InterPro" id="IPR016163">
    <property type="entry name" value="Ald_DH_C"/>
</dbReference>
<dbReference type="InterPro" id="IPR016160">
    <property type="entry name" value="Ald_DH_CS_CYS"/>
</dbReference>
<dbReference type="InterPro" id="IPR016162">
    <property type="entry name" value="Ald_DH_N"/>
</dbReference>
<dbReference type="InterPro" id="IPR015590">
    <property type="entry name" value="Aldehyde_DH_dom"/>
</dbReference>
<dbReference type="InterPro" id="IPR010061">
    <property type="entry name" value="MeMal-semiAld_DH"/>
</dbReference>
<dbReference type="NCBIfam" id="TIGR01722">
    <property type="entry name" value="MMSDH"/>
    <property type="match status" value="1"/>
</dbReference>
<dbReference type="PANTHER" id="PTHR43866">
    <property type="entry name" value="MALONATE-SEMIALDEHYDE DEHYDROGENASE"/>
    <property type="match status" value="1"/>
</dbReference>
<dbReference type="PANTHER" id="PTHR43866:SF3">
    <property type="entry name" value="METHYLMALONATE-SEMIALDEHYDE DEHYDROGENASE [ACYLATING], MITOCHONDRIAL"/>
    <property type="match status" value="1"/>
</dbReference>
<dbReference type="Pfam" id="PF00171">
    <property type="entry name" value="Aldedh"/>
    <property type="match status" value="1"/>
</dbReference>
<dbReference type="SUPFAM" id="SSF53720">
    <property type="entry name" value="ALDH-like"/>
    <property type="match status" value="1"/>
</dbReference>
<dbReference type="PROSITE" id="PS00070">
    <property type="entry name" value="ALDEHYDE_DEHYDR_CYS"/>
    <property type="match status" value="1"/>
</dbReference>
<comment type="function">
    <text evidence="7">Malonate and methylmalonate semialdehyde dehydrogenase involved in the catabolism of valine, thymine, and compounds catabolized by way of beta-alanine, including uracil and cytidine.</text>
</comment>
<comment type="catalytic activity">
    <reaction evidence="3">
        <text>3-oxopropanoate + NAD(+) + CoA + H2O = hydrogencarbonate + acetyl-CoA + NADH + H(+)</text>
        <dbReference type="Rhea" id="RHEA:76615"/>
        <dbReference type="ChEBI" id="CHEBI:15377"/>
        <dbReference type="ChEBI" id="CHEBI:15378"/>
        <dbReference type="ChEBI" id="CHEBI:17544"/>
        <dbReference type="ChEBI" id="CHEBI:33190"/>
        <dbReference type="ChEBI" id="CHEBI:57287"/>
        <dbReference type="ChEBI" id="CHEBI:57288"/>
        <dbReference type="ChEBI" id="CHEBI:57540"/>
        <dbReference type="ChEBI" id="CHEBI:57945"/>
        <dbReference type="EC" id="1.2.1.27"/>
    </reaction>
    <physiologicalReaction direction="left-to-right" evidence="3">
        <dbReference type="Rhea" id="RHEA:76616"/>
    </physiologicalReaction>
</comment>
<comment type="catalytic activity">
    <reaction evidence="7">
        <text>2-methyl-3-oxopropanoate + NAD(+) + CoA + H2O = propanoyl-CoA + hydrogencarbonate + NADH + H(+)</text>
        <dbReference type="Rhea" id="RHEA:20804"/>
        <dbReference type="ChEBI" id="CHEBI:15377"/>
        <dbReference type="ChEBI" id="CHEBI:15378"/>
        <dbReference type="ChEBI" id="CHEBI:17544"/>
        <dbReference type="ChEBI" id="CHEBI:57287"/>
        <dbReference type="ChEBI" id="CHEBI:57392"/>
        <dbReference type="ChEBI" id="CHEBI:57540"/>
        <dbReference type="ChEBI" id="CHEBI:57700"/>
        <dbReference type="ChEBI" id="CHEBI:57945"/>
        <dbReference type="EC" id="1.2.1.27"/>
    </reaction>
    <physiologicalReaction direction="left-to-right" evidence="7">
        <dbReference type="Rhea" id="RHEA:20805"/>
    </physiologicalReaction>
</comment>
<comment type="catalytic activity">
    <reaction evidence="3">
        <text>(R)-2-methyl-3-oxopropanoate + NAD(+) + CoA + H2O = propanoyl-CoA + hydrogencarbonate + NADH + H(+)</text>
        <dbReference type="Rhea" id="RHEA:76623"/>
        <dbReference type="ChEBI" id="CHEBI:15377"/>
        <dbReference type="ChEBI" id="CHEBI:15378"/>
        <dbReference type="ChEBI" id="CHEBI:17544"/>
        <dbReference type="ChEBI" id="CHEBI:57287"/>
        <dbReference type="ChEBI" id="CHEBI:57392"/>
        <dbReference type="ChEBI" id="CHEBI:57540"/>
        <dbReference type="ChEBI" id="CHEBI:57945"/>
        <dbReference type="ChEBI" id="CHEBI:141212"/>
    </reaction>
    <physiologicalReaction direction="left-to-right" evidence="3">
        <dbReference type="Rhea" id="RHEA:76624"/>
    </physiologicalReaction>
</comment>
<comment type="catalytic activity">
    <reaction evidence="3">
        <text>(S)-2-methyl-3-oxopropanoate + NAD(+) + CoA + H2O = propanoyl-CoA + hydrogencarbonate + NADH + H(+)</text>
        <dbReference type="Rhea" id="RHEA:76627"/>
        <dbReference type="ChEBI" id="CHEBI:15377"/>
        <dbReference type="ChEBI" id="CHEBI:15378"/>
        <dbReference type="ChEBI" id="CHEBI:17544"/>
        <dbReference type="ChEBI" id="CHEBI:57287"/>
        <dbReference type="ChEBI" id="CHEBI:57392"/>
        <dbReference type="ChEBI" id="CHEBI:57540"/>
        <dbReference type="ChEBI" id="CHEBI:57945"/>
        <dbReference type="ChEBI" id="CHEBI:62413"/>
    </reaction>
    <physiologicalReaction direction="left-to-right" evidence="3">
        <dbReference type="Rhea" id="RHEA:76628"/>
    </physiologicalReaction>
</comment>
<comment type="subunit">
    <text evidence="3">Homotetramer.</text>
</comment>
<comment type="subcellular location">
    <subcellularLocation>
        <location evidence="11">Mitochondrion</location>
    </subcellularLocation>
</comment>
<comment type="alternative products">
    <event type="alternative splicing"/>
    <isoform>
        <id>Q02252-1</id>
        <name>1</name>
        <sequence type="displayed"/>
    </isoform>
    <isoform>
        <id>Q02252-2</id>
        <name>2</name>
        <sequence type="described" ref="VSP_055067"/>
    </isoform>
</comment>
<comment type="disease" evidence="6 7">
    <disease id="DI-01973">
        <name>Methylmalonate semialdehyde dehydrogenase deficiency</name>
        <acronym>MMSDHD</acronym>
        <description>A metabolic disorder characterized by elevated beta-alanine, 3-hydroxypropionic acid, and both isomers of 3-amino and 3-hydroxyisobutyric acids in urine organic acids.</description>
        <dbReference type="MIM" id="614105"/>
    </disease>
    <text>The disease may be caused by variants affecting the gene represented in this entry.</text>
</comment>
<comment type="similarity">
    <text evidence="10">Belongs to the aldehyde dehydrogenase family.</text>
</comment>
<name>MMSA_HUMAN</name>
<gene>
    <name evidence="12" type="primary">ALDH6A1</name>
    <name evidence="8" type="synonym">MMSDH</name>
</gene>
<feature type="transit peptide" description="Mitochondrion" evidence="1">
    <location>
        <begin position="1"/>
        <end position="33"/>
    </location>
</feature>
<feature type="chain" id="PRO_0000007189" description="Methylmalonate-semialdehyde/malonate-semialdehyde dehydrogenase [acylating], mitochondrial">
    <location>
        <begin position="34"/>
        <end position="535"/>
    </location>
</feature>
<feature type="active site" description="Nucleophile" evidence="5">
    <location>
        <position position="317"/>
    </location>
</feature>
<feature type="binding site" evidence="2">
    <location>
        <position position="183"/>
    </location>
    <ligand>
        <name>NAD(+)</name>
        <dbReference type="ChEBI" id="CHEBI:57540"/>
    </ligand>
</feature>
<feature type="binding site" evidence="2">
    <location>
        <position position="185"/>
    </location>
    <ligand>
        <name>NAD(+)</name>
        <dbReference type="ChEBI" id="CHEBI:57540"/>
    </ligand>
</feature>
<feature type="binding site" evidence="2">
    <location>
        <position position="209"/>
    </location>
    <ligand>
        <name>NAD(+)</name>
        <dbReference type="ChEBI" id="CHEBI:57540"/>
    </ligand>
</feature>
<feature type="binding site" evidence="2">
    <location>
        <position position="212"/>
    </location>
    <ligand>
        <name>NAD(+)</name>
        <dbReference type="ChEBI" id="CHEBI:57540"/>
    </ligand>
</feature>
<feature type="binding site" evidence="2">
    <location>
        <position position="213"/>
    </location>
    <ligand>
        <name>NAD(+)</name>
        <dbReference type="ChEBI" id="CHEBI:57540"/>
    </ligand>
</feature>
<feature type="binding site" evidence="2">
    <location>
        <position position="262"/>
    </location>
    <ligand>
        <name>NAD(+)</name>
        <dbReference type="ChEBI" id="CHEBI:57540"/>
    </ligand>
</feature>
<feature type="binding site" evidence="2">
    <location>
        <position position="417"/>
    </location>
    <ligand>
        <name>NAD(+)</name>
        <dbReference type="ChEBI" id="CHEBI:57540"/>
    </ligand>
</feature>
<feature type="modified residue" description="N6-acetyllysine; alternate" evidence="4">
    <location>
        <position position="47"/>
    </location>
</feature>
<feature type="modified residue" description="N6-succinyllysine; alternate" evidence="4">
    <location>
        <position position="47"/>
    </location>
</feature>
<feature type="modified residue" description="N6-acetyllysine; alternate" evidence="4">
    <location>
        <position position="52"/>
    </location>
</feature>
<feature type="modified residue" description="N6-succinyllysine; alternate" evidence="4">
    <location>
        <position position="52"/>
    </location>
</feature>
<feature type="modified residue" description="N6-acetyllysine; alternate" evidence="4">
    <location>
        <position position="55"/>
    </location>
</feature>
<feature type="modified residue" description="N6-succinyllysine; alternate" evidence="4">
    <location>
        <position position="55"/>
    </location>
</feature>
<feature type="modified residue" description="N6-acetyllysine; alternate" evidence="4">
    <location>
        <position position="76"/>
    </location>
</feature>
<feature type="modified residue" description="N6-succinyllysine; alternate" evidence="4">
    <location>
        <position position="76"/>
    </location>
</feature>
<feature type="modified residue" description="N6-acetyllysine" evidence="4">
    <location>
        <position position="87"/>
    </location>
</feature>
<feature type="modified residue" description="N6-acetyllysine; alternate" evidence="4">
    <location>
        <position position="117"/>
    </location>
</feature>
<feature type="modified residue" description="N6-succinyllysine; alternate" evidence="4">
    <location>
        <position position="117"/>
    </location>
</feature>
<feature type="modified residue" description="N6-acetyllysine; alternate" evidence="4">
    <location>
        <position position="129"/>
    </location>
</feature>
<feature type="modified residue" description="N6-succinyllysine; alternate" evidence="4">
    <location>
        <position position="129"/>
    </location>
</feature>
<feature type="modified residue" description="Phosphoserine" evidence="13">
    <location>
        <position position="262"/>
    </location>
</feature>
<feature type="modified residue" description="N6-acetyllysine" evidence="4">
    <location>
        <position position="298"/>
    </location>
</feature>
<feature type="modified residue" description="N6-acetyllysine" evidence="4">
    <location>
        <position position="330"/>
    </location>
</feature>
<feature type="modified residue" description="N6-acetyllysine" evidence="4">
    <location>
        <position position="331"/>
    </location>
</feature>
<feature type="modified residue" description="N6-acetyllysine; alternate" evidence="4">
    <location>
        <position position="364"/>
    </location>
</feature>
<feature type="modified residue" description="N6-succinyllysine; alternate" evidence="4">
    <location>
        <position position="364"/>
    </location>
</feature>
<feature type="modified residue" description="N6-acetyllysine; alternate" evidence="4">
    <location>
        <position position="376"/>
    </location>
</feature>
<feature type="modified residue" description="N6-succinyllysine; alternate" evidence="4">
    <location>
        <position position="376"/>
    </location>
</feature>
<feature type="modified residue" description="Phosphoserine" evidence="13">
    <location>
        <position position="380"/>
    </location>
</feature>
<feature type="modified residue" description="N6-succinyllysine" evidence="4">
    <location>
        <position position="391"/>
    </location>
</feature>
<feature type="modified residue" description="N6-acetyllysine" evidence="4">
    <location>
        <position position="500"/>
    </location>
</feature>
<feature type="modified residue" description="N6-succinyllysine" evidence="4">
    <location>
        <position position="517"/>
    </location>
</feature>
<feature type="splice variant" id="VSP_055067" description="In isoform 2." evidence="9">
    <location>
        <begin position="104"/>
        <end position="116"/>
    </location>
</feature>
<feature type="sequence variant" id="VAR_088433" description="In MMSDHD; uncertain significance; dbSNP:rs869320672." evidence="7">
    <original>Y</original>
    <variation>H</variation>
    <location>
        <position position="172"/>
    </location>
</feature>
<feature type="sequence variant" id="VAR_010244" description="In MMSDHD; uncertain significance; dbSNP:rs72552258." evidence="6">
    <original>G</original>
    <variation>R</variation>
    <location>
        <position position="446"/>
    </location>
</feature>
<feature type="sequence variant" id="VAR_088434" description="In MMSDHD; uncertain significance; dbSNP:rs367863044." evidence="7">
    <original>R</original>
    <variation>C</variation>
    <location>
        <position position="535"/>
    </location>
</feature>
<feature type="sequence conflict" description="In Ref. 4; BAG57539." evidence="10" ref="4">
    <original>R</original>
    <variation>C</variation>
    <location>
        <position position="101"/>
    </location>
</feature>
<feature type="sequence conflict" description="In Ref. 4; BAG57539." evidence="10" ref="4">
    <original>E</original>
    <variation>K</variation>
    <location>
        <position position="212"/>
    </location>
</feature>
<feature type="sequence conflict" description="In Ref. 4; BAG57539." evidence="10" ref="4">
    <original>Y</original>
    <variation>H</variation>
    <location>
        <position position="460"/>
    </location>
</feature>
<feature type="strand" evidence="14">
    <location>
        <begin position="42"/>
        <end position="44"/>
    </location>
</feature>
<feature type="strand" evidence="14">
    <location>
        <begin position="47"/>
        <end position="49"/>
    </location>
</feature>
<feature type="strand" evidence="14">
    <location>
        <begin position="56"/>
        <end position="60"/>
    </location>
</feature>
<feature type="turn" evidence="14">
    <location>
        <begin position="62"/>
        <end position="64"/>
    </location>
</feature>
<feature type="strand" evidence="14">
    <location>
        <begin position="67"/>
        <end position="72"/>
    </location>
</feature>
<feature type="helix" evidence="14">
    <location>
        <begin position="76"/>
        <end position="95"/>
    </location>
</feature>
<feature type="helix" evidence="14">
    <location>
        <begin position="98"/>
        <end position="114"/>
    </location>
</feature>
<feature type="helix" evidence="14">
    <location>
        <begin position="116"/>
        <end position="126"/>
    </location>
</feature>
<feature type="helix" evidence="14">
    <location>
        <begin position="131"/>
        <end position="148"/>
    </location>
</feature>
<feature type="helix" evidence="14">
    <location>
        <begin position="151"/>
        <end position="154"/>
    </location>
</feature>
<feature type="strand" evidence="14">
    <location>
        <begin position="158"/>
        <end position="164"/>
    </location>
</feature>
<feature type="strand" evidence="14">
    <location>
        <begin position="167"/>
        <end position="175"/>
    </location>
</feature>
<feature type="strand" evidence="14">
    <location>
        <begin position="177"/>
        <end position="182"/>
    </location>
</feature>
<feature type="helix" evidence="14">
    <location>
        <begin position="190"/>
        <end position="201"/>
    </location>
</feature>
<feature type="strand" evidence="14">
    <location>
        <begin position="205"/>
        <end position="209"/>
    </location>
</feature>
<feature type="helix" evidence="14">
    <location>
        <begin position="215"/>
        <end position="226"/>
    </location>
</feature>
<feature type="turn" evidence="14">
    <location>
        <begin position="227"/>
        <end position="229"/>
    </location>
</feature>
<feature type="strand" evidence="14">
    <location>
        <begin position="234"/>
        <end position="237"/>
    </location>
</feature>
<feature type="helix" evidence="14">
    <location>
        <begin position="242"/>
        <end position="250"/>
    </location>
</feature>
<feature type="strand" evidence="14">
    <location>
        <begin position="254"/>
        <end position="261"/>
    </location>
</feature>
<feature type="helix" evidence="14">
    <location>
        <begin position="263"/>
        <end position="275"/>
    </location>
</feature>
<feature type="strand" evidence="14">
    <location>
        <begin position="279"/>
        <end position="283"/>
    </location>
</feature>
<feature type="strand" evidence="14">
    <location>
        <begin position="289"/>
        <end position="292"/>
    </location>
</feature>
<feature type="strand" evidence="17">
    <location>
        <begin position="294"/>
        <end position="296"/>
    </location>
</feature>
<feature type="helix" evidence="14">
    <location>
        <begin position="298"/>
        <end position="310"/>
    </location>
</feature>
<feature type="helix" evidence="14">
    <location>
        <begin position="311"/>
        <end position="314"/>
    </location>
</feature>
<feature type="strand" evidence="15">
    <location>
        <begin position="316"/>
        <end position="318"/>
    </location>
</feature>
<feature type="strand" evidence="14">
    <location>
        <begin position="322"/>
        <end position="326"/>
    </location>
</feature>
<feature type="helix" evidence="14">
    <location>
        <begin position="327"/>
        <end position="332"/>
    </location>
</feature>
<feature type="helix" evidence="14">
    <location>
        <begin position="333"/>
        <end position="341"/>
    </location>
</feature>
<feature type="strand" evidence="16">
    <location>
        <begin position="348"/>
        <end position="350"/>
    </location>
</feature>
<feature type="helix" evidence="14">
    <location>
        <begin position="361"/>
        <end position="376"/>
    </location>
</feature>
<feature type="strand" evidence="14">
    <location>
        <begin position="380"/>
        <end position="383"/>
    </location>
</feature>
<feature type="helix" evidence="15">
    <location>
        <begin position="385"/>
        <end position="387"/>
    </location>
</feature>
<feature type="strand" evidence="16">
    <location>
        <begin position="394"/>
        <end position="396"/>
    </location>
</feature>
<feature type="strand" evidence="14">
    <location>
        <begin position="402"/>
        <end position="406"/>
    </location>
</feature>
<feature type="helix" evidence="14">
    <location>
        <begin position="412"/>
        <end position="415"/>
    </location>
</feature>
<feature type="strand" evidence="14">
    <location>
        <begin position="420"/>
        <end position="430"/>
    </location>
</feature>
<feature type="helix" evidence="14">
    <location>
        <begin position="431"/>
        <end position="440"/>
    </location>
</feature>
<feature type="strand" evidence="14">
    <location>
        <begin position="447"/>
        <end position="450"/>
    </location>
</feature>
<feature type="helix" evidence="14">
    <location>
        <begin position="454"/>
        <end position="463"/>
    </location>
</feature>
<feature type="strand" evidence="14">
    <location>
        <begin position="467"/>
        <end position="472"/>
    </location>
</feature>
<feature type="turn" evidence="14">
    <location>
        <begin position="488"/>
        <end position="490"/>
    </location>
</feature>
<feature type="strand" evidence="14">
    <location>
        <begin position="491"/>
        <end position="495"/>
    </location>
</feature>
<feature type="helix" evidence="14">
    <location>
        <begin position="499"/>
        <end position="505"/>
    </location>
</feature>
<feature type="strand" evidence="14">
    <location>
        <begin position="507"/>
        <end position="515"/>
    </location>
</feature>
<feature type="helix" evidence="14">
    <location>
        <begin position="518"/>
        <end position="520"/>
    </location>
</feature>
<feature type="strand" evidence="16">
    <location>
        <begin position="521"/>
        <end position="523"/>
    </location>
</feature>
<accession>Q02252</accession>
<accession>B2R609</accession>
<accession>B4DFS8</accession>
<accession>J3KNU8</accession>
<accession>Q9UKM8</accession>
<protein>
    <recommendedName>
        <fullName evidence="11">Methylmalonate-semialdehyde/malonate-semialdehyde dehydrogenase [acylating], mitochondrial</fullName>
        <shortName evidence="8">MMSDH</shortName>
        <ecNumber evidence="7">1.2.1.27</ecNumber>
    </recommendedName>
    <alternativeName>
        <fullName evidence="12">Aldehyde dehydrogenase family 6 member A1</fullName>
    </alternativeName>
    <alternativeName>
        <fullName evidence="3">Malonate-semialdehyde dehydrogenase [acylating]</fullName>
    </alternativeName>
</protein>
<keyword id="KW-0002">3D-structure</keyword>
<keyword id="KW-0007">Acetylation</keyword>
<keyword id="KW-0025">Alternative splicing</keyword>
<keyword id="KW-0225">Disease variant</keyword>
<keyword id="KW-0496">Mitochondrion</keyword>
<keyword id="KW-0520">NAD</keyword>
<keyword id="KW-0560">Oxidoreductase</keyword>
<keyword id="KW-0597">Phosphoprotein</keyword>
<keyword id="KW-1267">Proteomics identification</keyword>
<keyword id="KW-1185">Reference proteome</keyword>
<keyword id="KW-0809">Transit peptide</keyword>
<proteinExistence type="evidence at protein level"/>
<sequence length="535" mass="57840">MAALLAAAAVRARILQVSSKVKSSPTWYSASSFSSSVPTVKLFIGGKFVESKSDKWIDIHNPATNEVIGRVPQATKAEMDAAIASCKRAFPAWADTSVLSRQQVLLRYQQLIKENLKEIAKLITLEQGKTLADAEGDVFRGLQVVEHACSVTSLMMGETMPSITKDMDLYSYRLPLGVCAGIAPFNFPAMIPLWMFPMAMVCGNTFLMKPSERVPGATMLLAKLLQDSGAPDGTLNIIHGQHEAVNFICDHPDIKAISFVGSNKAGEYIFERGSRHGKRVQANMGAKNHGVVMPDANKENTLNQLVGAAFGAAGQRCMALSTAVLVGEAKKWLPELVEHAKNLRVNAGDQPGADLGPLITPQAKERVCNLIDSGTKEGASILLDGRKIKVKGYENGNFVGPTIISNVKPNMTCYKEEIFGPVLVVLETETLDEAIQIVNNNPYGNGTAIFTTNGATARKYAHLVDVGQVGVNVPIPVPLPMFSFTGSRSSFRGDTNFYGKQGIQFYTQLKTITSQWKEEDATLSSPAVVMPTMGR</sequence>